<feature type="chain" id="PRO_0000208998" description="Probable potassium transport system protein Kup 1">
    <location>
        <begin position="1"/>
        <end position="657"/>
    </location>
</feature>
<feature type="transmembrane region" description="Helical" evidence="1">
    <location>
        <begin position="40"/>
        <end position="60"/>
    </location>
</feature>
<feature type="transmembrane region" description="Helical" evidence="1">
    <location>
        <begin position="88"/>
        <end position="108"/>
    </location>
</feature>
<feature type="transmembrane region" description="Helical" evidence="1">
    <location>
        <begin position="135"/>
        <end position="155"/>
    </location>
</feature>
<feature type="transmembrane region" description="Helical" evidence="1">
    <location>
        <begin position="172"/>
        <end position="192"/>
    </location>
</feature>
<feature type="transmembrane region" description="Helical" evidence="1">
    <location>
        <begin position="198"/>
        <end position="218"/>
    </location>
</feature>
<feature type="transmembrane region" description="Helical" evidence="1">
    <location>
        <begin position="241"/>
        <end position="261"/>
    </location>
</feature>
<feature type="transmembrane region" description="Helical" evidence="1">
    <location>
        <begin position="282"/>
        <end position="302"/>
    </location>
</feature>
<feature type="transmembrane region" description="Helical" evidence="1">
    <location>
        <begin position="320"/>
        <end position="340"/>
    </location>
</feature>
<feature type="transmembrane region" description="Helical" evidence="1">
    <location>
        <begin position="380"/>
        <end position="400"/>
    </location>
</feature>
<feature type="transmembrane region" description="Helical" evidence="1">
    <location>
        <begin position="402"/>
        <end position="422"/>
    </location>
</feature>
<feature type="transmembrane region" description="Helical" evidence="1">
    <location>
        <begin position="432"/>
        <end position="452"/>
    </location>
</feature>
<feature type="transmembrane region" description="Helical" evidence="1">
    <location>
        <begin position="454"/>
        <end position="474"/>
    </location>
</feature>
<evidence type="ECO:0000255" key="1">
    <source>
        <dbReference type="HAMAP-Rule" id="MF_01522"/>
    </source>
</evidence>
<sequence>MPIDRRAGSVKRRRIKFRDEAFSIHMTASITSTETQEGPVTSGFWALTLGSIGVVFGDIGTSPLYAFHEAVRGAAHGEPVTRVMVLGVLSLILWALLIVVTAKYVLLLLRADNNGEGGTLSLMALGQRALGRRSWFLLALGVVGASMFIGDSMITPAISVLSAVEGLKLATPALEHYVVPLTVLILVLLFAVQSKGTALVASAFGPVMVVWFTCIAVMGAVHIADDPSVLAAINPYYALQFLLSHGTIGLVTLGAVFLAVTGGEALYADLGHFGRKPIQAAWMFFVLPSLLINYFGQGALVLSDPSAIEHSFYRMVPEHLVLPLVGLATAATVIASQAVITGAYSLVYQAVQLGLLPRFEVRYTSESHAGQIYLPRVNRLLLIGVMLLVLLFHTPSNLASAYGIAVSTTMVADGIMGFVVIWKLWNWRAATAAAVILPFVVVDMSFFSANLLKLLEGAWVPLLFGAAMAGTIWTWRRGSGILIQKTRRIEVPLDDLIRSLEKRPPHIVKGTAVFLTSDPSFVPTALLHNLKHNKVLHEHNVVLTIETAHTPRVDLSERFRMEKISDKFSKVRLRFGFMEQPNVPKALAIARKQGWQFDIMSTSFFVSRRSLKASAQSGMPLWQDHLFIALSRSANDATDYFQIPTGRVVEVGTQVTI</sequence>
<gene>
    <name evidence="1" type="primary">kup1</name>
    <name type="ordered locus">blr3802</name>
</gene>
<dbReference type="EMBL" id="BA000040">
    <property type="protein sequence ID" value="BAC49067.1"/>
    <property type="molecule type" value="Genomic_DNA"/>
</dbReference>
<dbReference type="RefSeq" id="NP_770442.1">
    <property type="nucleotide sequence ID" value="NC_004463.1"/>
</dbReference>
<dbReference type="SMR" id="Q89NN6"/>
<dbReference type="FunCoup" id="Q89NN6">
    <property type="interactions" value="116"/>
</dbReference>
<dbReference type="STRING" id="224911.AAV28_15995"/>
<dbReference type="EnsemblBacteria" id="BAC49067">
    <property type="protein sequence ID" value="BAC49067"/>
    <property type="gene ID" value="BAC49067"/>
</dbReference>
<dbReference type="KEGG" id="bja:blr3802"/>
<dbReference type="PATRIC" id="fig|224911.5.peg.3796"/>
<dbReference type="eggNOG" id="COG3158">
    <property type="taxonomic scope" value="Bacteria"/>
</dbReference>
<dbReference type="HOGENOM" id="CLU_008142_4_2_5"/>
<dbReference type="InParanoid" id="Q89NN6"/>
<dbReference type="OrthoDB" id="9805577at2"/>
<dbReference type="PhylomeDB" id="Q89NN6"/>
<dbReference type="Proteomes" id="UP000002526">
    <property type="component" value="Chromosome"/>
</dbReference>
<dbReference type="GO" id="GO:0016020">
    <property type="term" value="C:membrane"/>
    <property type="evidence" value="ECO:0000318"/>
    <property type="project" value="GO_Central"/>
</dbReference>
<dbReference type="GO" id="GO:0005886">
    <property type="term" value="C:plasma membrane"/>
    <property type="evidence" value="ECO:0007669"/>
    <property type="project" value="UniProtKB-SubCell"/>
</dbReference>
<dbReference type="GO" id="GO:0015079">
    <property type="term" value="F:potassium ion transmembrane transporter activity"/>
    <property type="evidence" value="ECO:0000318"/>
    <property type="project" value="GO_Central"/>
</dbReference>
<dbReference type="GO" id="GO:0015293">
    <property type="term" value="F:symporter activity"/>
    <property type="evidence" value="ECO:0007669"/>
    <property type="project" value="UniProtKB-UniRule"/>
</dbReference>
<dbReference type="GO" id="GO:0006813">
    <property type="term" value="P:potassium ion transport"/>
    <property type="evidence" value="ECO:0000318"/>
    <property type="project" value="GO_Central"/>
</dbReference>
<dbReference type="HAMAP" id="MF_01522">
    <property type="entry name" value="Kup"/>
    <property type="match status" value="1"/>
</dbReference>
<dbReference type="InterPro" id="IPR003855">
    <property type="entry name" value="K+_transporter"/>
</dbReference>
<dbReference type="InterPro" id="IPR053952">
    <property type="entry name" value="K_trans_C"/>
</dbReference>
<dbReference type="InterPro" id="IPR053951">
    <property type="entry name" value="K_trans_N"/>
</dbReference>
<dbReference type="InterPro" id="IPR023051">
    <property type="entry name" value="Kup"/>
</dbReference>
<dbReference type="PANTHER" id="PTHR30540:SF79">
    <property type="entry name" value="LOW AFFINITY POTASSIUM TRANSPORT SYSTEM PROTEIN KUP"/>
    <property type="match status" value="1"/>
</dbReference>
<dbReference type="PANTHER" id="PTHR30540">
    <property type="entry name" value="OSMOTIC STRESS POTASSIUM TRANSPORTER"/>
    <property type="match status" value="1"/>
</dbReference>
<dbReference type="Pfam" id="PF02705">
    <property type="entry name" value="K_trans"/>
    <property type="match status" value="1"/>
</dbReference>
<dbReference type="Pfam" id="PF22776">
    <property type="entry name" value="K_trans_C"/>
    <property type="match status" value="1"/>
</dbReference>
<keyword id="KW-0997">Cell inner membrane</keyword>
<keyword id="KW-1003">Cell membrane</keyword>
<keyword id="KW-0406">Ion transport</keyword>
<keyword id="KW-0472">Membrane</keyword>
<keyword id="KW-0630">Potassium</keyword>
<keyword id="KW-0633">Potassium transport</keyword>
<keyword id="KW-1185">Reference proteome</keyword>
<keyword id="KW-0769">Symport</keyword>
<keyword id="KW-0812">Transmembrane</keyword>
<keyword id="KW-1133">Transmembrane helix</keyword>
<keyword id="KW-0813">Transport</keyword>
<name>KUP1_BRADU</name>
<organism>
    <name type="scientific">Bradyrhizobium diazoefficiens (strain JCM 10833 / BCRC 13528 / IAM 13628 / NBRC 14792 / USDA 110)</name>
    <dbReference type="NCBI Taxonomy" id="224911"/>
    <lineage>
        <taxon>Bacteria</taxon>
        <taxon>Pseudomonadati</taxon>
        <taxon>Pseudomonadota</taxon>
        <taxon>Alphaproteobacteria</taxon>
        <taxon>Hyphomicrobiales</taxon>
        <taxon>Nitrobacteraceae</taxon>
        <taxon>Bradyrhizobium</taxon>
    </lineage>
</organism>
<proteinExistence type="inferred from homology"/>
<accession>Q89NN6</accession>
<reference key="1">
    <citation type="journal article" date="2002" name="DNA Res.">
        <title>Complete genomic sequence of nitrogen-fixing symbiotic bacterium Bradyrhizobium japonicum USDA110.</title>
        <authorList>
            <person name="Kaneko T."/>
            <person name="Nakamura Y."/>
            <person name="Sato S."/>
            <person name="Minamisawa K."/>
            <person name="Uchiumi T."/>
            <person name="Sasamoto S."/>
            <person name="Watanabe A."/>
            <person name="Idesawa K."/>
            <person name="Iriguchi M."/>
            <person name="Kawashima K."/>
            <person name="Kohara M."/>
            <person name="Matsumoto M."/>
            <person name="Shimpo S."/>
            <person name="Tsuruoka H."/>
            <person name="Wada T."/>
            <person name="Yamada M."/>
            <person name="Tabata S."/>
        </authorList>
    </citation>
    <scope>NUCLEOTIDE SEQUENCE [LARGE SCALE GENOMIC DNA]</scope>
    <source>
        <strain>JCM 10833 / BCRC 13528 / IAM 13628 / NBRC 14792 / USDA 110</strain>
    </source>
</reference>
<comment type="function">
    <text evidence="1">Transport of potassium into the cell. Likely operates as a K(+):H(+) symporter.</text>
</comment>
<comment type="catalytic activity">
    <reaction evidence="1">
        <text>K(+)(in) + H(+)(in) = K(+)(out) + H(+)(out)</text>
        <dbReference type="Rhea" id="RHEA:28490"/>
        <dbReference type="ChEBI" id="CHEBI:15378"/>
        <dbReference type="ChEBI" id="CHEBI:29103"/>
    </reaction>
    <physiologicalReaction direction="right-to-left" evidence="1">
        <dbReference type="Rhea" id="RHEA:28492"/>
    </physiologicalReaction>
</comment>
<comment type="subcellular location">
    <subcellularLocation>
        <location evidence="1">Cell inner membrane</location>
        <topology evidence="1">Multi-pass membrane protein</topology>
    </subcellularLocation>
</comment>
<comment type="similarity">
    <text evidence="1">Belongs to the HAK/KUP transporter (TC 2.A.72) family.</text>
</comment>
<protein>
    <recommendedName>
        <fullName evidence="1">Probable potassium transport system protein Kup 1</fullName>
    </recommendedName>
</protein>